<reference key="1">
    <citation type="journal article" date="2004" name="Nat. Genet.">
        <title>Complete sequencing and characterization of 21,243 full-length human cDNAs.</title>
        <authorList>
            <person name="Ota T."/>
            <person name="Suzuki Y."/>
            <person name="Nishikawa T."/>
            <person name="Otsuki T."/>
            <person name="Sugiyama T."/>
            <person name="Irie R."/>
            <person name="Wakamatsu A."/>
            <person name="Hayashi K."/>
            <person name="Sato H."/>
            <person name="Nagai K."/>
            <person name="Kimura K."/>
            <person name="Makita H."/>
            <person name="Sekine M."/>
            <person name="Obayashi M."/>
            <person name="Nishi T."/>
            <person name="Shibahara T."/>
            <person name="Tanaka T."/>
            <person name="Ishii S."/>
            <person name="Yamamoto J."/>
            <person name="Saito K."/>
            <person name="Kawai Y."/>
            <person name="Isono Y."/>
            <person name="Nakamura Y."/>
            <person name="Nagahari K."/>
            <person name="Murakami K."/>
            <person name="Yasuda T."/>
            <person name="Iwayanagi T."/>
            <person name="Wagatsuma M."/>
            <person name="Shiratori A."/>
            <person name="Sudo H."/>
            <person name="Hosoiri T."/>
            <person name="Kaku Y."/>
            <person name="Kodaira H."/>
            <person name="Kondo H."/>
            <person name="Sugawara M."/>
            <person name="Takahashi M."/>
            <person name="Kanda K."/>
            <person name="Yokoi T."/>
            <person name="Furuya T."/>
            <person name="Kikkawa E."/>
            <person name="Omura Y."/>
            <person name="Abe K."/>
            <person name="Kamihara K."/>
            <person name="Katsuta N."/>
            <person name="Sato K."/>
            <person name="Tanikawa M."/>
            <person name="Yamazaki M."/>
            <person name="Ninomiya K."/>
            <person name="Ishibashi T."/>
            <person name="Yamashita H."/>
            <person name="Murakawa K."/>
            <person name="Fujimori K."/>
            <person name="Tanai H."/>
            <person name="Kimata M."/>
            <person name="Watanabe M."/>
            <person name="Hiraoka S."/>
            <person name="Chiba Y."/>
            <person name="Ishida S."/>
            <person name="Ono Y."/>
            <person name="Takiguchi S."/>
            <person name="Watanabe S."/>
            <person name="Yosida M."/>
            <person name="Hotuta T."/>
            <person name="Kusano J."/>
            <person name="Kanehori K."/>
            <person name="Takahashi-Fujii A."/>
            <person name="Hara H."/>
            <person name="Tanase T.-O."/>
            <person name="Nomura Y."/>
            <person name="Togiya S."/>
            <person name="Komai F."/>
            <person name="Hara R."/>
            <person name="Takeuchi K."/>
            <person name="Arita M."/>
            <person name="Imose N."/>
            <person name="Musashino K."/>
            <person name="Yuuki H."/>
            <person name="Oshima A."/>
            <person name="Sasaki N."/>
            <person name="Aotsuka S."/>
            <person name="Yoshikawa Y."/>
            <person name="Matsunawa H."/>
            <person name="Ichihara T."/>
            <person name="Shiohata N."/>
            <person name="Sano S."/>
            <person name="Moriya S."/>
            <person name="Momiyama H."/>
            <person name="Satoh N."/>
            <person name="Takami S."/>
            <person name="Terashima Y."/>
            <person name="Suzuki O."/>
            <person name="Nakagawa S."/>
            <person name="Senoh A."/>
            <person name="Mizoguchi H."/>
            <person name="Goto Y."/>
            <person name="Shimizu F."/>
            <person name="Wakebe H."/>
            <person name="Hishigaki H."/>
            <person name="Watanabe T."/>
            <person name="Sugiyama A."/>
            <person name="Takemoto M."/>
            <person name="Kawakami B."/>
            <person name="Yamazaki M."/>
            <person name="Watanabe K."/>
            <person name="Kumagai A."/>
            <person name="Itakura S."/>
            <person name="Fukuzumi Y."/>
            <person name="Fujimori Y."/>
            <person name="Komiyama M."/>
            <person name="Tashiro H."/>
            <person name="Tanigami A."/>
            <person name="Fujiwara T."/>
            <person name="Ono T."/>
            <person name="Yamada K."/>
            <person name="Fujii Y."/>
            <person name="Ozaki K."/>
            <person name="Hirao M."/>
            <person name="Ohmori Y."/>
            <person name="Kawabata A."/>
            <person name="Hikiji T."/>
            <person name="Kobatake N."/>
            <person name="Inagaki H."/>
            <person name="Ikema Y."/>
            <person name="Okamoto S."/>
            <person name="Okitani R."/>
            <person name="Kawakami T."/>
            <person name="Noguchi S."/>
            <person name="Itoh T."/>
            <person name="Shigeta K."/>
            <person name="Senba T."/>
            <person name="Matsumura K."/>
            <person name="Nakajima Y."/>
            <person name="Mizuno T."/>
            <person name="Morinaga M."/>
            <person name="Sasaki M."/>
            <person name="Togashi T."/>
            <person name="Oyama M."/>
            <person name="Hata H."/>
            <person name="Watanabe M."/>
            <person name="Komatsu T."/>
            <person name="Mizushima-Sugano J."/>
            <person name="Satoh T."/>
            <person name="Shirai Y."/>
            <person name="Takahashi Y."/>
            <person name="Nakagawa K."/>
            <person name="Okumura K."/>
            <person name="Nagase T."/>
            <person name="Nomura N."/>
            <person name="Kikuchi H."/>
            <person name="Masuho Y."/>
            <person name="Yamashita R."/>
            <person name="Nakai K."/>
            <person name="Yada T."/>
            <person name="Nakamura Y."/>
            <person name="Ohara O."/>
            <person name="Isogai T."/>
            <person name="Sugano S."/>
        </authorList>
    </citation>
    <scope>NUCLEOTIDE SEQUENCE [LARGE SCALE MRNA] (ISOFORMS 2 AND 4)</scope>
    <source>
        <tissue>Brain</tissue>
        <tissue>Hippocampus</tissue>
    </source>
</reference>
<reference key="2">
    <citation type="journal article" date="2003" name="Nature">
        <title>The DNA sequence of human chromosome 7.</title>
        <authorList>
            <person name="Hillier L.W."/>
            <person name="Fulton R.S."/>
            <person name="Fulton L.A."/>
            <person name="Graves T.A."/>
            <person name="Pepin K.H."/>
            <person name="Wagner-McPherson C."/>
            <person name="Layman D."/>
            <person name="Maas J."/>
            <person name="Jaeger S."/>
            <person name="Walker R."/>
            <person name="Wylie K."/>
            <person name="Sekhon M."/>
            <person name="Becker M.C."/>
            <person name="O'Laughlin M.D."/>
            <person name="Schaller M.E."/>
            <person name="Fewell G.A."/>
            <person name="Delehaunty K.D."/>
            <person name="Miner T.L."/>
            <person name="Nash W.E."/>
            <person name="Cordes M."/>
            <person name="Du H."/>
            <person name="Sun H."/>
            <person name="Edwards J."/>
            <person name="Bradshaw-Cordum H."/>
            <person name="Ali J."/>
            <person name="Andrews S."/>
            <person name="Isak A."/>
            <person name="Vanbrunt A."/>
            <person name="Nguyen C."/>
            <person name="Du F."/>
            <person name="Lamar B."/>
            <person name="Courtney L."/>
            <person name="Kalicki J."/>
            <person name="Ozersky P."/>
            <person name="Bielicki L."/>
            <person name="Scott K."/>
            <person name="Holmes A."/>
            <person name="Harkins R."/>
            <person name="Harris A."/>
            <person name="Strong C.M."/>
            <person name="Hou S."/>
            <person name="Tomlinson C."/>
            <person name="Dauphin-Kohlberg S."/>
            <person name="Kozlowicz-Reilly A."/>
            <person name="Leonard S."/>
            <person name="Rohlfing T."/>
            <person name="Rock S.M."/>
            <person name="Tin-Wollam A.-M."/>
            <person name="Abbott A."/>
            <person name="Minx P."/>
            <person name="Maupin R."/>
            <person name="Strowmatt C."/>
            <person name="Latreille P."/>
            <person name="Miller N."/>
            <person name="Johnson D."/>
            <person name="Murray J."/>
            <person name="Woessner J.P."/>
            <person name="Wendl M.C."/>
            <person name="Yang S.-P."/>
            <person name="Schultz B.R."/>
            <person name="Wallis J.W."/>
            <person name="Spieth J."/>
            <person name="Bieri T.A."/>
            <person name="Nelson J.O."/>
            <person name="Berkowicz N."/>
            <person name="Wohldmann P.E."/>
            <person name="Cook L.L."/>
            <person name="Hickenbotham M.T."/>
            <person name="Eldred J."/>
            <person name="Williams D."/>
            <person name="Bedell J.A."/>
            <person name="Mardis E.R."/>
            <person name="Clifton S.W."/>
            <person name="Chissoe S.L."/>
            <person name="Marra M.A."/>
            <person name="Raymond C."/>
            <person name="Haugen E."/>
            <person name="Gillett W."/>
            <person name="Zhou Y."/>
            <person name="James R."/>
            <person name="Phelps K."/>
            <person name="Iadanoto S."/>
            <person name="Bubb K."/>
            <person name="Simms E."/>
            <person name="Levy R."/>
            <person name="Clendenning J."/>
            <person name="Kaul R."/>
            <person name="Kent W.J."/>
            <person name="Furey T.S."/>
            <person name="Baertsch R.A."/>
            <person name="Brent M.R."/>
            <person name="Keibler E."/>
            <person name="Flicek P."/>
            <person name="Bork P."/>
            <person name="Suyama M."/>
            <person name="Bailey J.A."/>
            <person name="Portnoy M.E."/>
            <person name="Torrents D."/>
            <person name="Chinwalla A.T."/>
            <person name="Gish W.R."/>
            <person name="Eddy S.R."/>
            <person name="McPherson J.D."/>
            <person name="Olson M.V."/>
            <person name="Eichler E.E."/>
            <person name="Green E.D."/>
            <person name="Waterston R.H."/>
            <person name="Wilson R.K."/>
        </authorList>
    </citation>
    <scope>NUCLEOTIDE SEQUENCE [LARGE SCALE GENOMIC DNA]</scope>
</reference>
<reference key="3">
    <citation type="journal article" date="2003" name="Science">
        <title>Human chromosome 7: DNA sequence and biology.</title>
        <authorList>
            <person name="Scherer S.W."/>
            <person name="Cheung J."/>
            <person name="MacDonald J.R."/>
            <person name="Osborne L.R."/>
            <person name="Nakabayashi K."/>
            <person name="Herbrick J.-A."/>
            <person name="Carson A.R."/>
            <person name="Parker-Katiraee L."/>
            <person name="Skaug J."/>
            <person name="Khaja R."/>
            <person name="Zhang J."/>
            <person name="Hudek A.K."/>
            <person name="Li M."/>
            <person name="Haddad M."/>
            <person name="Duggan G.E."/>
            <person name="Fernandez B.A."/>
            <person name="Kanematsu E."/>
            <person name="Gentles S."/>
            <person name="Christopoulos C.C."/>
            <person name="Choufani S."/>
            <person name="Kwasnicka D."/>
            <person name="Zheng X.H."/>
            <person name="Lai Z."/>
            <person name="Nusskern D.R."/>
            <person name="Zhang Q."/>
            <person name="Gu Z."/>
            <person name="Lu F."/>
            <person name="Zeesman S."/>
            <person name="Nowaczyk M.J."/>
            <person name="Teshima I."/>
            <person name="Chitayat D."/>
            <person name="Shuman C."/>
            <person name="Weksberg R."/>
            <person name="Zackai E.H."/>
            <person name="Grebe T.A."/>
            <person name="Cox S.R."/>
            <person name="Kirkpatrick S.J."/>
            <person name="Rahman N."/>
            <person name="Friedman J.M."/>
            <person name="Heng H.H.Q."/>
            <person name="Pelicci P.G."/>
            <person name="Lo-Coco F."/>
            <person name="Belloni E."/>
            <person name="Shaffer L.G."/>
            <person name="Pober B."/>
            <person name="Morton C.C."/>
            <person name="Gusella J.F."/>
            <person name="Bruns G.A.P."/>
            <person name="Korf B.R."/>
            <person name="Quade B.J."/>
            <person name="Ligon A.H."/>
            <person name="Ferguson H."/>
            <person name="Higgins A.W."/>
            <person name="Leach N.T."/>
            <person name="Herrick S.R."/>
            <person name="Lemyre E."/>
            <person name="Farra C.G."/>
            <person name="Kim H.-G."/>
            <person name="Summers A.M."/>
            <person name="Gripp K.W."/>
            <person name="Roberts W."/>
            <person name="Szatmari P."/>
            <person name="Winsor E.J.T."/>
            <person name="Grzeschik K.-H."/>
            <person name="Teebi A."/>
            <person name="Minassian B.A."/>
            <person name="Kere J."/>
            <person name="Armengol L."/>
            <person name="Pujana M.A."/>
            <person name="Estivill X."/>
            <person name="Wilson M.D."/>
            <person name="Koop B.F."/>
            <person name="Tosi S."/>
            <person name="Moore G.E."/>
            <person name="Boright A.P."/>
            <person name="Zlotorynski E."/>
            <person name="Kerem B."/>
            <person name="Kroisel P.M."/>
            <person name="Petek E."/>
            <person name="Oscier D.G."/>
            <person name="Mould S.J."/>
            <person name="Doehner H."/>
            <person name="Doehner K."/>
            <person name="Rommens J.M."/>
            <person name="Vincent J.B."/>
            <person name="Venter J.C."/>
            <person name="Li P.W."/>
            <person name="Mural R.J."/>
            <person name="Adams M.D."/>
            <person name="Tsui L.-C."/>
        </authorList>
    </citation>
    <scope>NUCLEOTIDE SEQUENCE [LARGE SCALE GENOMIC DNA]</scope>
</reference>
<reference key="4">
    <citation type="submission" date="2005-07" db="EMBL/GenBank/DDBJ databases">
        <authorList>
            <person name="Mural R.J."/>
            <person name="Istrail S."/>
            <person name="Sutton G.G."/>
            <person name="Florea L."/>
            <person name="Halpern A.L."/>
            <person name="Mobarry C.M."/>
            <person name="Lippert R."/>
            <person name="Walenz B."/>
            <person name="Shatkay H."/>
            <person name="Dew I."/>
            <person name="Miller J.R."/>
            <person name="Flanigan M.J."/>
            <person name="Edwards N.J."/>
            <person name="Bolanos R."/>
            <person name="Fasulo D."/>
            <person name="Halldorsson B.V."/>
            <person name="Hannenhalli S."/>
            <person name="Turner R."/>
            <person name="Yooseph S."/>
            <person name="Lu F."/>
            <person name="Nusskern D.R."/>
            <person name="Shue B.C."/>
            <person name="Zheng X.H."/>
            <person name="Zhong F."/>
            <person name="Delcher A.L."/>
            <person name="Huson D.H."/>
            <person name="Kravitz S.A."/>
            <person name="Mouchard L."/>
            <person name="Reinert K."/>
            <person name="Remington K.A."/>
            <person name="Clark A.G."/>
            <person name="Waterman M.S."/>
            <person name="Eichler E.E."/>
            <person name="Adams M.D."/>
            <person name="Hunkapiller M.W."/>
            <person name="Myers E.W."/>
            <person name="Venter J.C."/>
        </authorList>
    </citation>
    <scope>NUCLEOTIDE SEQUENCE [LARGE SCALE GENOMIC DNA]</scope>
</reference>
<reference key="5">
    <citation type="journal article" date="2004" name="Genome Res.">
        <title>The status, quality, and expansion of the NIH full-length cDNA project: the Mammalian Gene Collection (MGC).</title>
        <authorList>
            <consortium name="The MGC Project Team"/>
        </authorList>
    </citation>
    <scope>NUCLEOTIDE SEQUENCE [LARGE SCALE MRNA] (ISOFORM 3)</scope>
    <source>
        <tissue>Testis</tissue>
    </source>
</reference>
<reference key="6">
    <citation type="journal article" date="2003" name="Genome Res.">
        <title>The secreted protein discovery initiative (SPDI), a large-scale effort to identify novel human secreted and transmembrane proteins: a bioinformatics assessment.</title>
        <authorList>
            <person name="Clark H.F."/>
            <person name="Gurney A.L."/>
            <person name="Abaya E."/>
            <person name="Baker K."/>
            <person name="Baldwin D.T."/>
            <person name="Brush J."/>
            <person name="Chen J."/>
            <person name="Chow B."/>
            <person name="Chui C."/>
            <person name="Crowley C."/>
            <person name="Currell B."/>
            <person name="Deuel B."/>
            <person name="Dowd P."/>
            <person name="Eaton D."/>
            <person name="Foster J.S."/>
            <person name="Grimaldi C."/>
            <person name="Gu Q."/>
            <person name="Hass P.E."/>
            <person name="Heldens S."/>
            <person name="Huang A."/>
            <person name="Kim H.S."/>
            <person name="Klimowski L."/>
            <person name="Jin Y."/>
            <person name="Johnson S."/>
            <person name="Lee J."/>
            <person name="Lewis L."/>
            <person name="Liao D."/>
            <person name="Mark M.R."/>
            <person name="Robbie E."/>
            <person name="Sanchez C."/>
            <person name="Schoenfeld J."/>
            <person name="Seshagiri S."/>
            <person name="Simmons L."/>
            <person name="Singh J."/>
            <person name="Smith V."/>
            <person name="Stinson J."/>
            <person name="Vagts A."/>
            <person name="Vandlen R.L."/>
            <person name="Watanabe C."/>
            <person name="Wieand D."/>
            <person name="Woods K."/>
            <person name="Xie M.-H."/>
            <person name="Yansura D.G."/>
            <person name="Yi S."/>
            <person name="Yu G."/>
            <person name="Yuan J."/>
            <person name="Zhang M."/>
            <person name="Zhang Z."/>
            <person name="Goddard A.D."/>
            <person name="Wood W.I."/>
            <person name="Godowski P.J."/>
            <person name="Gray A.M."/>
        </authorList>
    </citation>
    <scope>NUCLEOTIDE SEQUENCE [LARGE SCALE MRNA] OF 194-1894 (ISOFORM 2)</scope>
</reference>
<reference key="7">
    <citation type="journal article" date="2007" name="BMC Genomics">
        <title>The full-ORF clone resource of the German cDNA consortium.</title>
        <authorList>
            <person name="Bechtel S."/>
            <person name="Rosenfelder H."/>
            <person name="Duda A."/>
            <person name="Schmidt C.P."/>
            <person name="Ernst U."/>
            <person name="Wellenreuther R."/>
            <person name="Mehrle A."/>
            <person name="Schuster C."/>
            <person name="Bahr A."/>
            <person name="Bloecker H."/>
            <person name="Heubner D."/>
            <person name="Hoerlein A."/>
            <person name="Michel G."/>
            <person name="Wedler H."/>
            <person name="Koehrer K."/>
            <person name="Ottenwaelder B."/>
            <person name="Poustka A."/>
            <person name="Wiemann S."/>
            <person name="Schupp I."/>
        </authorList>
    </citation>
    <scope>NUCLEOTIDE SEQUENCE [LARGE SCALE MRNA] OF 206-1894 (ISOFORM 3)</scope>
    <scope>PARTIAL NUCLEOTIDE SEQUENCE [LARGE SCALE MRNA] (ISOFORM 4)</scope>
    <source>
        <tissue>Kidney</tissue>
        <tissue>Testis</tissue>
    </source>
</reference>
<reference key="8">
    <citation type="journal article" date="2000" name="DNA Res.">
        <title>Prediction of the coding sequences of unidentified human genes. XVIII. The complete sequences of 100 new cDNA clones from brain which code for large proteins in vitro.</title>
        <authorList>
            <person name="Nagase T."/>
            <person name="Kikuno R."/>
            <person name="Nakayama M."/>
            <person name="Hirosawa M."/>
            <person name="Ohara O."/>
        </authorList>
    </citation>
    <scope>NUCLEOTIDE SEQUENCE [LARGE SCALE MRNA] OF 433-1894 (ISOFORM 1)</scope>
    <source>
        <tissue>Brain</tissue>
    </source>
</reference>
<reference key="9">
    <citation type="journal article" date="2002" name="DNA Res.">
        <title>Construction of expression-ready cDNA clones for KIAA genes: manual curation of 330 KIAA cDNA clones.</title>
        <authorList>
            <person name="Nakajima D."/>
            <person name="Okazaki N."/>
            <person name="Yamakawa H."/>
            <person name="Kikuno R."/>
            <person name="Ohara O."/>
            <person name="Nagase T."/>
        </authorList>
    </citation>
    <scope>SEQUENCE REVISION</scope>
</reference>
<reference key="10">
    <citation type="journal article" date="2009" name="Science">
        <title>Lysine acetylation targets protein complexes and co-regulates major cellular functions.</title>
        <authorList>
            <person name="Choudhary C."/>
            <person name="Kumar C."/>
            <person name="Gnad F."/>
            <person name="Nielsen M.L."/>
            <person name="Rehman M."/>
            <person name="Walther T.C."/>
            <person name="Olsen J.V."/>
            <person name="Mann M."/>
        </authorList>
    </citation>
    <scope>ACETYLATION [LARGE SCALE ANALYSIS] AT LYS-1350</scope>
    <scope>IDENTIFICATION BY MASS SPECTROMETRY [LARGE SCALE ANALYSIS]</scope>
</reference>
<organism>
    <name type="scientific">Homo sapiens</name>
    <name type="common">Human</name>
    <dbReference type="NCBI Taxonomy" id="9606"/>
    <lineage>
        <taxon>Eukaryota</taxon>
        <taxon>Metazoa</taxon>
        <taxon>Chordata</taxon>
        <taxon>Craniata</taxon>
        <taxon>Vertebrata</taxon>
        <taxon>Euteleostomi</taxon>
        <taxon>Mammalia</taxon>
        <taxon>Eutheria</taxon>
        <taxon>Euarchontoglires</taxon>
        <taxon>Primates</taxon>
        <taxon>Haplorrhini</taxon>
        <taxon>Catarrhini</taxon>
        <taxon>Hominidae</taxon>
        <taxon>Homo</taxon>
    </lineage>
</organism>
<protein>
    <recommendedName>
        <fullName>Plexin-A4</fullName>
    </recommendedName>
</protein>
<feature type="signal peptide" evidence="2">
    <location>
        <begin position="1"/>
        <end position="23"/>
    </location>
</feature>
<feature type="chain" id="PRO_0000240283" description="Plexin-A4">
    <location>
        <begin position="24"/>
        <end position="1894"/>
    </location>
</feature>
<feature type="topological domain" description="Extracellular" evidence="2">
    <location>
        <begin position="24"/>
        <end position="1237"/>
    </location>
</feature>
<feature type="transmembrane region" description="Helical" evidence="2">
    <location>
        <begin position="1238"/>
        <end position="1258"/>
    </location>
</feature>
<feature type="topological domain" description="Cytoplasmic" evidence="2">
    <location>
        <begin position="1259"/>
        <end position="1894"/>
    </location>
</feature>
<feature type="domain" description="Sema" evidence="3">
    <location>
        <begin position="24"/>
        <end position="507"/>
    </location>
</feature>
<feature type="domain" description="PSI 1">
    <location>
        <begin position="509"/>
        <end position="559"/>
    </location>
</feature>
<feature type="domain" description="PSI 2">
    <location>
        <begin position="655"/>
        <end position="702"/>
    </location>
</feature>
<feature type="domain" description="PSI 3">
    <location>
        <begin position="803"/>
        <end position="856"/>
    </location>
</feature>
<feature type="domain" description="IPT/TIG 1">
    <location>
        <begin position="858"/>
        <end position="952"/>
    </location>
</feature>
<feature type="domain" description="IPT/TIG 2">
    <location>
        <begin position="954"/>
        <end position="1037"/>
    </location>
</feature>
<feature type="domain" description="IPT/TIG 3">
    <location>
        <begin position="1040"/>
        <end position="1139"/>
    </location>
</feature>
<feature type="domain" description="IPT/TIG 4">
    <location>
        <begin position="1142"/>
        <end position="1230"/>
    </location>
</feature>
<feature type="modified residue" description="N6-acetyllysine" evidence="9">
    <location>
        <position position="1350"/>
    </location>
</feature>
<feature type="glycosylation site" description="N-linked (GlcNAc...) asparagine" evidence="2">
    <location>
        <position position="655"/>
    </location>
</feature>
<feature type="glycosylation site" description="N-linked (GlcNAc...) asparagine" evidence="2">
    <location>
        <position position="1007"/>
    </location>
</feature>
<feature type="glycosylation site" description="N-linked (GlcNAc...) asparagine" evidence="2">
    <location>
        <position position="1132"/>
    </location>
</feature>
<feature type="glycosylation site" description="N-linked (GlcNAc...) asparagine" evidence="2">
    <location>
        <position position="1180"/>
    </location>
</feature>
<feature type="disulfide bond" evidence="3">
    <location>
        <begin position="95"/>
        <end position="104"/>
    </location>
</feature>
<feature type="disulfide bond" evidence="3">
    <location>
        <begin position="130"/>
        <end position="138"/>
    </location>
</feature>
<feature type="disulfide bond" evidence="3">
    <location>
        <begin position="284"/>
        <end position="405"/>
    </location>
</feature>
<feature type="disulfide bond" evidence="3">
    <location>
        <begin position="300"/>
        <end position="356"/>
    </location>
</feature>
<feature type="disulfide bond" evidence="3">
    <location>
        <begin position="374"/>
        <end position="393"/>
    </location>
</feature>
<feature type="disulfide bond" evidence="3">
    <location>
        <begin position="510"/>
        <end position="527"/>
    </location>
</feature>
<feature type="disulfide bond" evidence="3">
    <location>
        <begin position="516"/>
        <end position="558"/>
    </location>
</feature>
<feature type="disulfide bond" evidence="3">
    <location>
        <begin position="519"/>
        <end position="536"/>
    </location>
</feature>
<feature type="disulfide bond" evidence="3">
    <location>
        <begin position="530"/>
        <end position="542"/>
    </location>
</feature>
<feature type="disulfide bond" evidence="3">
    <location>
        <begin position="593"/>
        <end position="612"/>
    </location>
</feature>
<feature type="splice variant" id="VSP_019334" description="In isoform 4." evidence="5">
    <location>
        <begin position="1"/>
        <end position="1550"/>
    </location>
</feature>
<feature type="splice variant" id="VSP_019330" description="In isoform 3." evidence="6 7">
    <original>IRVDGPRGNALQYETVQVVDPGPVLRDMAFSKDHEQLYIMSERQLTRVPVESCGQYQSCGECLGS</original>
    <variation>SFGTGPQGGITQEWIGVEGDPPGANIASQEQMLCVYLQCSSHKAISDQRVQPLLCCFLNVPGNSS</variation>
    <location>
        <begin position="458"/>
        <end position="522"/>
    </location>
</feature>
<feature type="splice variant" id="VSP_019331" description="In isoform 2." evidence="4 5">
    <original>IRVDGPRGNALQYETVQVVDPGPVLRDMAFSKDHE</original>
    <variation>MPGTSLCPTLELQTGPRSHRATVTLELLFSSCSSN</variation>
    <location>
        <begin position="458"/>
        <end position="492"/>
    </location>
</feature>
<feature type="splice variant" id="VSP_019332" description="In isoform 2." evidence="4 5">
    <location>
        <begin position="493"/>
        <end position="1894"/>
    </location>
</feature>
<feature type="splice variant" id="VSP_019333" description="In isoform 3." evidence="6 7">
    <location>
        <begin position="523"/>
        <end position="1894"/>
    </location>
</feature>
<feature type="sequence conflict" description="In Ref. 7; CAD39161." evidence="8" ref="7">
    <original>N</original>
    <variation>D</variation>
    <location>
        <position position="1750"/>
    </location>
</feature>
<feature type="sequence conflict" description="In Ref. 7; CAD39161." evidence="8" ref="7">
    <original>I</original>
    <variation>V</variation>
    <location>
        <position position="1804"/>
    </location>
</feature>
<feature type="strand" evidence="10">
    <location>
        <begin position="1499"/>
        <end position="1504"/>
    </location>
</feature>
<feature type="strand" evidence="10">
    <location>
        <begin position="1515"/>
        <end position="1520"/>
    </location>
</feature>
<feature type="helix" evidence="10">
    <location>
        <begin position="1525"/>
        <end position="1536"/>
    </location>
</feature>
<feature type="turn" evidence="10">
    <location>
        <begin position="1537"/>
        <end position="1539"/>
    </location>
</feature>
<feature type="helix" evidence="10">
    <location>
        <begin position="1542"/>
        <end position="1544"/>
    </location>
</feature>
<feature type="helix" evidence="10">
    <location>
        <begin position="1548"/>
        <end position="1550"/>
    </location>
</feature>
<feature type="strand" evidence="10">
    <location>
        <begin position="1551"/>
        <end position="1556"/>
    </location>
</feature>
<feature type="strand" evidence="10">
    <location>
        <begin position="1562"/>
        <end position="1565"/>
    </location>
</feature>
<feature type="strand" evidence="10">
    <location>
        <begin position="1567"/>
        <end position="1569"/>
    </location>
</feature>
<feature type="helix" evidence="10">
    <location>
        <begin position="1584"/>
        <end position="1587"/>
    </location>
</feature>
<feature type="strand" evidence="10">
    <location>
        <begin position="1594"/>
        <end position="1599"/>
    </location>
</feature>
<feature type="sequence conflict" description="In Ref. 1; BAC85615 and 6; AAQ89209." evidence="8" ref="1 6">
    <original>M</original>
    <variation>V</variation>
    <location sequence="Q9HCM2-2">
        <position position="458"/>
    </location>
</feature>
<feature type="sequence conflict" description="In Ref. 5; AAH28744." evidence="8" ref="5">
    <original>E</original>
    <variation>A</variation>
    <location sequence="Q9HCM2-3">
        <position position="475"/>
    </location>
</feature>
<keyword id="KW-0002">3D-structure</keyword>
<keyword id="KW-0007">Acetylation</keyword>
<keyword id="KW-0025">Alternative splicing</keyword>
<keyword id="KW-1003">Cell membrane</keyword>
<keyword id="KW-1015">Disulfide bond</keyword>
<keyword id="KW-0325">Glycoprotein</keyword>
<keyword id="KW-0472">Membrane</keyword>
<keyword id="KW-1267">Proteomics identification</keyword>
<keyword id="KW-0675">Receptor</keyword>
<keyword id="KW-1185">Reference proteome</keyword>
<keyword id="KW-0677">Repeat</keyword>
<keyword id="KW-0732">Signal</keyword>
<keyword id="KW-0812">Transmembrane</keyword>
<keyword id="KW-1133">Transmembrane helix</keyword>
<evidence type="ECO:0000250" key="1"/>
<evidence type="ECO:0000255" key="2"/>
<evidence type="ECO:0000255" key="3">
    <source>
        <dbReference type="PROSITE-ProRule" id="PRU00352"/>
    </source>
</evidence>
<evidence type="ECO:0000303" key="4">
    <source>
    </source>
</evidence>
<evidence type="ECO:0000303" key="5">
    <source>
    </source>
</evidence>
<evidence type="ECO:0000303" key="6">
    <source>
    </source>
</evidence>
<evidence type="ECO:0000303" key="7">
    <source>
    </source>
</evidence>
<evidence type="ECO:0000305" key="8"/>
<evidence type="ECO:0007744" key="9">
    <source>
    </source>
</evidence>
<evidence type="ECO:0007829" key="10">
    <source>
        <dbReference type="PDB" id="4E74"/>
    </source>
</evidence>
<comment type="function">
    <text evidence="1">Coreceptor for SEMA3A. Necessary for signaling by class 3 semaphorins and subsequent remodeling of the cytoskeleton. Plays a role in axon guidance in the developing nervous system. Class 3 semaphorins bind to a complex composed of a neuropilin and a plexin. The plexin modulates the affinity of the complex for specific semaphorins, and its cytoplasmic domain is required for the activation of down-stream signaling events in the cytoplasm (By similarity).</text>
</comment>
<comment type="subunit">
    <text evidence="1">Interacts with NRP1 and NRP2.</text>
</comment>
<comment type="interaction">
    <interactant intactId="EBI-25962330">
        <id>Q9HCM2-3</id>
    </interactant>
    <interactant intactId="EBI-466029">
        <id>P42858</id>
        <label>HTT</label>
    </interactant>
    <organismsDiffer>false</organismsDiffer>
    <experiments>3</experiments>
</comment>
<comment type="subcellular location">
    <subcellularLocation>
        <location evidence="8">Cell membrane</location>
        <topology evidence="8">Single-pass type I membrane protein</topology>
    </subcellularLocation>
</comment>
<comment type="alternative products">
    <event type="alternative splicing"/>
    <isoform>
        <id>Q9HCM2-1</id>
        <name>1</name>
        <sequence type="displayed"/>
    </isoform>
    <isoform>
        <id>Q9HCM2-2</id>
        <name>2</name>
        <sequence type="described" ref="VSP_019331 VSP_019332"/>
    </isoform>
    <isoform>
        <id>Q9HCM2-3</id>
        <name>3</name>
        <sequence type="described" ref="VSP_019330 VSP_019333"/>
    </isoform>
    <isoform>
        <id>Q9HCM2-4</id>
        <name>4</name>
        <sequence type="described" ref="VSP_019334"/>
    </isoform>
</comment>
<comment type="similarity">
    <text evidence="8">Belongs to the plexin family.</text>
</comment>
<comment type="sequence caution" evidence="8">
    <conflict type="erroneous initiation">
        <sequence resource="EMBL-CDS" id="AAQ89209"/>
    </conflict>
</comment>
<proteinExistence type="evidence at protein level"/>
<name>PLXA4_HUMAN</name>
<dbReference type="EMBL" id="AK095606">
    <property type="protein sequence ID" value="BAC04587.1"/>
    <property type="molecule type" value="mRNA"/>
</dbReference>
<dbReference type="EMBL" id="AK123428">
    <property type="protein sequence ID" value="BAC85615.1"/>
    <property type="molecule type" value="mRNA"/>
</dbReference>
<dbReference type="EMBL" id="AC009364">
    <property type="status" value="NOT_ANNOTATED_CDS"/>
    <property type="molecule type" value="Genomic_DNA"/>
</dbReference>
<dbReference type="EMBL" id="AC009365">
    <property type="status" value="NOT_ANNOTATED_CDS"/>
    <property type="molecule type" value="Genomic_DNA"/>
</dbReference>
<dbReference type="EMBL" id="AC009785">
    <property type="status" value="NOT_ANNOTATED_CDS"/>
    <property type="molecule type" value="Genomic_DNA"/>
</dbReference>
<dbReference type="EMBL" id="AC011625">
    <property type="status" value="NOT_ANNOTATED_CDS"/>
    <property type="molecule type" value="Genomic_DNA"/>
</dbReference>
<dbReference type="EMBL" id="AC018643">
    <property type="status" value="NOT_ANNOTATED_CDS"/>
    <property type="molecule type" value="Genomic_DNA"/>
</dbReference>
<dbReference type="EMBL" id="AC026239">
    <property type="status" value="NOT_ANNOTATED_CDS"/>
    <property type="molecule type" value="Genomic_DNA"/>
</dbReference>
<dbReference type="EMBL" id="CH236950">
    <property type="protein sequence ID" value="EAL24076.1"/>
    <property type="molecule type" value="Genomic_DNA"/>
</dbReference>
<dbReference type="EMBL" id="CH471070">
    <property type="protein sequence ID" value="EAW83793.1"/>
    <property type="molecule type" value="Genomic_DNA"/>
</dbReference>
<dbReference type="EMBL" id="BC028744">
    <property type="protein sequence ID" value="AAH28744.1"/>
    <property type="molecule type" value="mRNA"/>
</dbReference>
<dbReference type="EMBL" id="AY358850">
    <property type="protein sequence ID" value="AAQ89209.1"/>
    <property type="status" value="ALT_INIT"/>
    <property type="molecule type" value="mRNA"/>
</dbReference>
<dbReference type="EMBL" id="AL137352">
    <property type="protein sequence ID" value="CAB70707.1"/>
    <property type="molecule type" value="mRNA"/>
</dbReference>
<dbReference type="EMBL" id="AL834504">
    <property type="protein sequence ID" value="CAD39161.3"/>
    <property type="molecule type" value="mRNA"/>
</dbReference>
<dbReference type="EMBL" id="AB046770">
    <property type="protein sequence ID" value="BAB13376.3"/>
    <property type="molecule type" value="mRNA"/>
</dbReference>
<dbReference type="CCDS" id="CCDS43646.1">
    <molecule id="Q9HCM2-1"/>
</dbReference>
<dbReference type="CCDS" id="CCDS43647.1">
    <molecule id="Q9HCM2-2"/>
</dbReference>
<dbReference type="CCDS" id="CCDS5826.1">
    <molecule id="Q9HCM2-3"/>
</dbReference>
<dbReference type="PIR" id="T46426">
    <property type="entry name" value="T46426"/>
</dbReference>
<dbReference type="RefSeq" id="NP_001099013.1">
    <molecule id="Q9HCM2-2"/>
    <property type="nucleotide sequence ID" value="NM_001105543.2"/>
</dbReference>
<dbReference type="RefSeq" id="NP_001380826.1">
    <molecule id="Q9HCM2-1"/>
    <property type="nucleotide sequence ID" value="NM_001393897.1"/>
</dbReference>
<dbReference type="RefSeq" id="NP_065962.1">
    <molecule id="Q9HCM2-1"/>
    <property type="nucleotide sequence ID" value="NM_020911.2"/>
</dbReference>
<dbReference type="RefSeq" id="NP_861440.2">
    <molecule id="Q9HCM2-3"/>
    <property type="nucleotide sequence ID" value="NM_181775.4"/>
</dbReference>
<dbReference type="RefSeq" id="XP_005250743.1">
    <property type="nucleotide sequence ID" value="XM_005250686.4"/>
</dbReference>
<dbReference type="RefSeq" id="XP_006716234.1">
    <molecule id="Q9HCM2-1"/>
    <property type="nucleotide sequence ID" value="XM_006716171.5"/>
</dbReference>
<dbReference type="RefSeq" id="XP_047276973.1">
    <molecule id="Q9HCM2-1"/>
    <property type="nucleotide sequence ID" value="XM_047421017.1"/>
</dbReference>
<dbReference type="RefSeq" id="XP_047276975.1">
    <molecule id="Q9HCM2-2"/>
    <property type="nucleotide sequence ID" value="XM_047421019.1"/>
</dbReference>
<dbReference type="RefSeq" id="XP_054215283.1">
    <molecule id="Q9HCM2-1"/>
    <property type="nucleotide sequence ID" value="XM_054359308.1"/>
</dbReference>
<dbReference type="RefSeq" id="XP_054215284.1">
    <molecule id="Q9HCM2-1"/>
    <property type="nucleotide sequence ID" value="XM_054359309.1"/>
</dbReference>
<dbReference type="RefSeq" id="XP_054215287.1">
    <molecule id="Q9HCM2-2"/>
    <property type="nucleotide sequence ID" value="XM_054359312.1"/>
</dbReference>
<dbReference type="PDB" id="4E74">
    <property type="method" value="X-ray"/>
    <property type="resolution" value="1.58 A"/>
    <property type="chains" value="A=1488-1603"/>
</dbReference>
<dbReference type="PDBsum" id="4E74"/>
<dbReference type="SMR" id="Q9HCM2"/>
<dbReference type="BioGRID" id="124849">
    <property type="interactions" value="39"/>
</dbReference>
<dbReference type="CORUM" id="Q9HCM2"/>
<dbReference type="FunCoup" id="Q9HCM2">
    <property type="interactions" value="394"/>
</dbReference>
<dbReference type="IntAct" id="Q9HCM2">
    <property type="interactions" value="14"/>
</dbReference>
<dbReference type="MINT" id="Q9HCM2"/>
<dbReference type="STRING" id="9606.ENSP00000352882"/>
<dbReference type="GlyCosmos" id="Q9HCM2">
    <property type="glycosylation" value="4 sites, No reported glycans"/>
</dbReference>
<dbReference type="GlyGen" id="Q9HCM2">
    <property type="glycosylation" value="9 sites, 4 N-linked glycans (4 sites), 1 O-linked glycan (3 sites)"/>
</dbReference>
<dbReference type="iPTMnet" id="Q9HCM2"/>
<dbReference type="PhosphoSitePlus" id="Q9HCM2"/>
<dbReference type="SwissPalm" id="Q9HCM2"/>
<dbReference type="BioMuta" id="PLXNA4"/>
<dbReference type="DMDM" id="108860890"/>
<dbReference type="jPOST" id="Q9HCM2"/>
<dbReference type="MassIVE" id="Q9HCM2"/>
<dbReference type="PaxDb" id="9606-ENSP00000352882"/>
<dbReference type="PeptideAtlas" id="Q9HCM2"/>
<dbReference type="ProteomicsDB" id="623"/>
<dbReference type="ProteomicsDB" id="81755">
    <molecule id="Q9HCM2-1"/>
</dbReference>
<dbReference type="ProteomicsDB" id="81756">
    <molecule id="Q9HCM2-2"/>
</dbReference>
<dbReference type="ProteomicsDB" id="81757">
    <molecule id="Q9HCM2-3"/>
</dbReference>
<dbReference type="ProteomicsDB" id="81758">
    <molecule id="Q9HCM2-4"/>
</dbReference>
<dbReference type="Antibodypedia" id="32143">
    <property type="antibodies" value="196 antibodies from 26 providers"/>
</dbReference>
<dbReference type="DNASU" id="91584"/>
<dbReference type="Ensembl" id="ENST00000321063.9">
    <molecule id="Q9HCM2-1"/>
    <property type="protein sequence ID" value="ENSP00000323194.4"/>
    <property type="gene ID" value="ENSG00000221866.10"/>
</dbReference>
<dbReference type="Ensembl" id="ENST00000359827.7">
    <molecule id="Q9HCM2-1"/>
    <property type="protein sequence ID" value="ENSP00000352882.3"/>
    <property type="gene ID" value="ENSG00000221866.10"/>
</dbReference>
<dbReference type="Ensembl" id="ENST00000378539.5">
    <molecule id="Q9HCM2-3"/>
    <property type="protein sequence ID" value="ENSP00000367800.5"/>
    <property type="gene ID" value="ENSG00000221866.10"/>
</dbReference>
<dbReference type="Ensembl" id="ENST00000423507.6">
    <molecule id="Q9HCM2-2"/>
    <property type="protein sequence ID" value="ENSP00000392772.2"/>
    <property type="gene ID" value="ENSG00000221866.10"/>
</dbReference>
<dbReference type="GeneID" id="91584"/>
<dbReference type="KEGG" id="hsa:91584"/>
<dbReference type="MANE-Select" id="ENST00000321063.9">
    <property type="protein sequence ID" value="ENSP00000323194.4"/>
    <property type="RefSeq nucleotide sequence ID" value="NM_020911.2"/>
    <property type="RefSeq protein sequence ID" value="NP_065962.1"/>
</dbReference>
<dbReference type="UCSC" id="uc003vra.4">
    <molecule id="Q9HCM2-1"/>
    <property type="organism name" value="human"/>
</dbReference>
<dbReference type="AGR" id="HGNC:9102"/>
<dbReference type="CTD" id="91584"/>
<dbReference type="DisGeNET" id="91584"/>
<dbReference type="GeneCards" id="PLXNA4"/>
<dbReference type="HGNC" id="HGNC:9102">
    <property type="gene designation" value="PLXNA4"/>
</dbReference>
<dbReference type="HPA" id="ENSG00000221866">
    <property type="expression patterns" value="Tissue enhanced (adipose)"/>
</dbReference>
<dbReference type="MIM" id="604280">
    <property type="type" value="gene"/>
</dbReference>
<dbReference type="neXtProt" id="NX_Q9HCM2"/>
<dbReference type="OpenTargets" id="ENSG00000221866"/>
<dbReference type="PharmGKB" id="PA162399757"/>
<dbReference type="VEuPathDB" id="HostDB:ENSG00000221866"/>
<dbReference type="eggNOG" id="KOG3610">
    <property type="taxonomic scope" value="Eukaryota"/>
</dbReference>
<dbReference type="GeneTree" id="ENSGT01050000244850"/>
<dbReference type="HOGENOM" id="CLU_001436_2_0_1"/>
<dbReference type="InParanoid" id="Q9HCM2"/>
<dbReference type="OMA" id="HESRWLE"/>
<dbReference type="OrthoDB" id="125363at2759"/>
<dbReference type="PAN-GO" id="Q9HCM2">
    <property type="GO annotations" value="9 GO annotations based on evolutionary models"/>
</dbReference>
<dbReference type="PhylomeDB" id="Q9HCM2"/>
<dbReference type="TreeFam" id="TF312962"/>
<dbReference type="PathwayCommons" id="Q9HCM2"/>
<dbReference type="Reactome" id="R-HSA-399954">
    <property type="pathway name" value="Sema3A PAK dependent Axon repulsion"/>
</dbReference>
<dbReference type="Reactome" id="R-HSA-399955">
    <property type="pathway name" value="SEMA3A-Plexin repulsion signaling by inhibiting Integrin adhesion"/>
</dbReference>
<dbReference type="Reactome" id="R-HSA-399956">
    <property type="pathway name" value="CRMPs in Sema3A signaling"/>
</dbReference>
<dbReference type="Reactome" id="R-HSA-416700">
    <property type="pathway name" value="Other semaphorin interactions"/>
</dbReference>
<dbReference type="Reactome" id="R-HSA-9615017">
    <property type="pathway name" value="FOXO-mediated transcription of oxidative stress, metabolic and neuronal genes"/>
</dbReference>
<dbReference type="SignaLink" id="Q9HCM2"/>
<dbReference type="SIGNOR" id="Q9HCM2"/>
<dbReference type="BioGRID-ORCS" id="91584">
    <property type="hits" value="13 hits in 1154 CRISPR screens"/>
</dbReference>
<dbReference type="ChiTaRS" id="PLXNA4">
    <property type="organism name" value="human"/>
</dbReference>
<dbReference type="EvolutionaryTrace" id="Q9HCM2"/>
<dbReference type="GeneWiki" id="PLXNA4A"/>
<dbReference type="GenomeRNAi" id="91584"/>
<dbReference type="Pharos" id="Q9HCM2">
    <property type="development level" value="Tbio"/>
</dbReference>
<dbReference type="PRO" id="PR:Q9HCM2"/>
<dbReference type="Proteomes" id="UP000005640">
    <property type="component" value="Chromosome 7"/>
</dbReference>
<dbReference type="RNAct" id="Q9HCM2">
    <property type="molecule type" value="protein"/>
</dbReference>
<dbReference type="Bgee" id="ENSG00000221866">
    <property type="expression patterns" value="Expressed in buccal mucosa cell and 163 other cell types or tissues"/>
</dbReference>
<dbReference type="ExpressionAtlas" id="Q9HCM2">
    <property type="expression patterns" value="baseline and differential"/>
</dbReference>
<dbReference type="GO" id="GO:0150053">
    <property type="term" value="C:cerebellar climbing fiber to Purkinje cell synapse"/>
    <property type="evidence" value="ECO:0007669"/>
    <property type="project" value="Ensembl"/>
</dbReference>
<dbReference type="GO" id="GO:0005886">
    <property type="term" value="C:plasma membrane"/>
    <property type="evidence" value="ECO:0000318"/>
    <property type="project" value="GO_Central"/>
</dbReference>
<dbReference type="GO" id="GO:0002116">
    <property type="term" value="C:semaphorin receptor complex"/>
    <property type="evidence" value="ECO:0000318"/>
    <property type="project" value="GO_Central"/>
</dbReference>
<dbReference type="GO" id="GO:0017154">
    <property type="term" value="F:semaphorin receptor activity"/>
    <property type="evidence" value="ECO:0000318"/>
    <property type="project" value="GO_Central"/>
</dbReference>
<dbReference type="GO" id="GO:0021960">
    <property type="term" value="P:anterior commissure morphogenesis"/>
    <property type="evidence" value="ECO:0007669"/>
    <property type="project" value="Ensembl"/>
</dbReference>
<dbReference type="GO" id="GO:0007411">
    <property type="term" value="P:axon guidance"/>
    <property type="evidence" value="ECO:0000318"/>
    <property type="project" value="GO_Central"/>
</dbReference>
<dbReference type="GO" id="GO:0021785">
    <property type="term" value="P:branchiomotor neuron axon guidance"/>
    <property type="evidence" value="ECO:0000250"/>
    <property type="project" value="ParkinsonsUK-UCL"/>
</dbReference>
<dbReference type="GO" id="GO:0021793">
    <property type="term" value="P:chemorepulsion of branchiomotor axon"/>
    <property type="evidence" value="ECO:0007669"/>
    <property type="project" value="Ensembl"/>
</dbReference>
<dbReference type="GO" id="GO:0035050">
    <property type="term" value="P:embryonic heart tube development"/>
    <property type="evidence" value="ECO:0007669"/>
    <property type="project" value="Ensembl"/>
</dbReference>
<dbReference type="GO" id="GO:0021612">
    <property type="term" value="P:facial nerve structural organization"/>
    <property type="evidence" value="ECO:0000250"/>
    <property type="project" value="ParkinsonsUK-UCL"/>
</dbReference>
<dbReference type="GO" id="GO:0021615">
    <property type="term" value="P:glossopharyngeal nerve morphogenesis"/>
    <property type="evidence" value="ECO:0007669"/>
    <property type="project" value="Ensembl"/>
</dbReference>
<dbReference type="GO" id="GO:0099558">
    <property type="term" value="P:maintenance of synapse structure"/>
    <property type="evidence" value="ECO:0007669"/>
    <property type="project" value="Ensembl"/>
</dbReference>
<dbReference type="GO" id="GO:0008045">
    <property type="term" value="P:motor neuron axon guidance"/>
    <property type="evidence" value="ECO:0000250"/>
    <property type="project" value="ParkinsonsUK-UCL"/>
</dbReference>
<dbReference type="GO" id="GO:0021784">
    <property type="term" value="P:postganglionic parasympathetic fiber development"/>
    <property type="evidence" value="ECO:0007669"/>
    <property type="project" value="Ensembl"/>
</dbReference>
<dbReference type="GO" id="GO:0048841">
    <property type="term" value="P:regulation of axon extension involved in axon guidance"/>
    <property type="evidence" value="ECO:0007669"/>
    <property type="project" value="Ensembl"/>
</dbReference>
<dbReference type="GO" id="GO:0030334">
    <property type="term" value="P:regulation of cell migration"/>
    <property type="evidence" value="ECO:0000318"/>
    <property type="project" value="GO_Central"/>
</dbReference>
<dbReference type="GO" id="GO:0050923">
    <property type="term" value="P:regulation of negative chemotaxis"/>
    <property type="evidence" value="ECO:0007669"/>
    <property type="project" value="Ensembl"/>
</dbReference>
<dbReference type="GO" id="GO:0071526">
    <property type="term" value="P:semaphorin-plexin signaling pathway"/>
    <property type="evidence" value="ECO:0000250"/>
    <property type="project" value="ParkinsonsUK-UCL"/>
</dbReference>
<dbReference type="GO" id="GO:0048485">
    <property type="term" value="P:sympathetic nervous system development"/>
    <property type="evidence" value="ECO:0007669"/>
    <property type="project" value="Ensembl"/>
</dbReference>
<dbReference type="GO" id="GO:0097492">
    <property type="term" value="P:sympathetic neuron axon guidance"/>
    <property type="evidence" value="ECO:0007669"/>
    <property type="project" value="Ensembl"/>
</dbReference>
<dbReference type="GO" id="GO:0007416">
    <property type="term" value="P:synapse assembly"/>
    <property type="evidence" value="ECO:0000318"/>
    <property type="project" value="GO_Central"/>
</dbReference>
<dbReference type="GO" id="GO:0021637">
    <property type="term" value="P:trigeminal nerve structural organization"/>
    <property type="evidence" value="ECO:0000250"/>
    <property type="project" value="ParkinsonsUK-UCL"/>
</dbReference>
<dbReference type="GO" id="GO:0021644">
    <property type="term" value="P:vagus nerve morphogenesis"/>
    <property type="evidence" value="ECO:0007669"/>
    <property type="project" value="Ensembl"/>
</dbReference>
<dbReference type="CDD" id="cd00603">
    <property type="entry name" value="IPT_PCSR"/>
    <property type="match status" value="1"/>
</dbReference>
<dbReference type="CDD" id="cd01180">
    <property type="entry name" value="IPT_plexin_repeat1"/>
    <property type="match status" value="1"/>
</dbReference>
<dbReference type="CDD" id="cd01179">
    <property type="entry name" value="IPT_plexin_repeat2"/>
    <property type="match status" value="1"/>
</dbReference>
<dbReference type="CDD" id="cd01181">
    <property type="entry name" value="IPT_plexin_repeat3"/>
    <property type="match status" value="1"/>
</dbReference>
<dbReference type="CDD" id="cd12790">
    <property type="entry name" value="RasGAP_plexin_A"/>
    <property type="match status" value="1"/>
</dbReference>
<dbReference type="CDD" id="cd11274">
    <property type="entry name" value="Sema_plexin_A4"/>
    <property type="match status" value="1"/>
</dbReference>
<dbReference type="FunFam" id="1.10.506.10:FF:000005">
    <property type="entry name" value="Plexin A1"/>
    <property type="match status" value="1"/>
</dbReference>
<dbReference type="FunFam" id="1.10.506.10:FF:000006">
    <property type="entry name" value="Plexin A1"/>
    <property type="match status" value="1"/>
</dbReference>
<dbReference type="FunFam" id="2.60.40.10:FF:000123">
    <property type="entry name" value="Plexin A1"/>
    <property type="match status" value="1"/>
</dbReference>
<dbReference type="FunFam" id="2.130.10.10:FF:000006">
    <property type="entry name" value="Plexin A2"/>
    <property type="match status" value="1"/>
</dbReference>
<dbReference type="FunFam" id="2.60.40.10:FF:000071">
    <property type="entry name" value="Plexin A2"/>
    <property type="match status" value="1"/>
</dbReference>
<dbReference type="FunFam" id="2.60.40.10:FF:000339">
    <property type="entry name" value="Plexin A2"/>
    <property type="match status" value="1"/>
</dbReference>
<dbReference type="FunFam" id="3.10.20.90:FF:000018">
    <property type="entry name" value="Plexin A2"/>
    <property type="match status" value="1"/>
</dbReference>
<dbReference type="FunFam" id="2.60.40.10:FF:000329">
    <property type="entry name" value="Plexin A4"/>
    <property type="match status" value="1"/>
</dbReference>
<dbReference type="FunFam" id="2.60.40.10:FF:001973">
    <property type="entry name" value="Plexin A4, B"/>
    <property type="match status" value="1"/>
</dbReference>
<dbReference type="Gene3D" id="1.10.506.10">
    <property type="entry name" value="GTPase Activation - p120gap, domain 1"/>
    <property type="match status" value="1"/>
</dbReference>
<dbReference type="Gene3D" id="2.60.40.10">
    <property type="entry name" value="Immunoglobulins"/>
    <property type="match status" value="4"/>
</dbReference>
<dbReference type="Gene3D" id="3.10.20.90">
    <property type="entry name" value="Phosphatidylinositol 3-kinase Catalytic Subunit, Chain A, domain 1"/>
    <property type="match status" value="1"/>
</dbReference>
<dbReference type="Gene3D" id="2.130.10.10">
    <property type="entry name" value="YVTN repeat-like/Quinoprotein amine dehydrogenase"/>
    <property type="match status" value="1"/>
</dbReference>
<dbReference type="InterPro" id="IPR013783">
    <property type="entry name" value="Ig-like_fold"/>
</dbReference>
<dbReference type="InterPro" id="IPR014756">
    <property type="entry name" value="Ig_E-set"/>
</dbReference>
<dbReference type="InterPro" id="IPR002909">
    <property type="entry name" value="IPT_dom"/>
</dbReference>
<dbReference type="InterPro" id="IPR031148">
    <property type="entry name" value="Plexin"/>
</dbReference>
<dbReference type="InterPro" id="IPR013548">
    <property type="entry name" value="Plexin_cytoplasmic_RasGAP_dom"/>
</dbReference>
<dbReference type="InterPro" id="IPR046800">
    <property type="entry name" value="Plexin_RBD"/>
</dbReference>
<dbReference type="InterPro" id="IPR002165">
    <property type="entry name" value="Plexin_repeat"/>
</dbReference>
<dbReference type="InterPro" id="IPR016201">
    <property type="entry name" value="PSI"/>
</dbReference>
<dbReference type="InterPro" id="IPR008936">
    <property type="entry name" value="Rho_GTPase_activation_prot"/>
</dbReference>
<dbReference type="InterPro" id="IPR001627">
    <property type="entry name" value="Semap_dom"/>
</dbReference>
<dbReference type="InterPro" id="IPR036352">
    <property type="entry name" value="Semap_dom_sf"/>
</dbReference>
<dbReference type="InterPro" id="IPR041019">
    <property type="entry name" value="TIG1_plexin"/>
</dbReference>
<dbReference type="InterPro" id="IPR041362">
    <property type="entry name" value="TIG2_plexin"/>
</dbReference>
<dbReference type="InterPro" id="IPR015943">
    <property type="entry name" value="WD40/YVTN_repeat-like_dom_sf"/>
</dbReference>
<dbReference type="PANTHER" id="PTHR22625">
    <property type="entry name" value="PLEXIN"/>
    <property type="match status" value="1"/>
</dbReference>
<dbReference type="PANTHER" id="PTHR22625:SF34">
    <property type="entry name" value="PLEXIN-A4"/>
    <property type="match status" value="1"/>
</dbReference>
<dbReference type="Pfam" id="PF08337">
    <property type="entry name" value="Plexin_cytopl"/>
    <property type="match status" value="1"/>
</dbReference>
<dbReference type="Pfam" id="PF20170">
    <property type="entry name" value="Plexin_RBD"/>
    <property type="match status" value="1"/>
</dbReference>
<dbReference type="Pfam" id="PF01437">
    <property type="entry name" value="PSI"/>
    <property type="match status" value="2"/>
</dbReference>
<dbReference type="Pfam" id="PF24479">
    <property type="entry name" value="PSI_PlexinA-B"/>
    <property type="match status" value="1"/>
</dbReference>
<dbReference type="Pfam" id="PF01403">
    <property type="entry name" value="Sema"/>
    <property type="match status" value="1"/>
</dbReference>
<dbReference type="Pfam" id="PF01833">
    <property type="entry name" value="TIG"/>
    <property type="match status" value="4"/>
</dbReference>
<dbReference type="Pfam" id="PF18020">
    <property type="entry name" value="TIG_2"/>
    <property type="match status" value="1"/>
</dbReference>
<dbReference type="Pfam" id="PF17960">
    <property type="entry name" value="TIG_plexin"/>
    <property type="match status" value="1"/>
</dbReference>
<dbReference type="SMART" id="SM00429">
    <property type="entry name" value="IPT"/>
    <property type="match status" value="4"/>
</dbReference>
<dbReference type="SMART" id="SM00423">
    <property type="entry name" value="PSI"/>
    <property type="match status" value="3"/>
</dbReference>
<dbReference type="SMART" id="SM00630">
    <property type="entry name" value="Sema"/>
    <property type="match status" value="1"/>
</dbReference>
<dbReference type="SUPFAM" id="SSF81296">
    <property type="entry name" value="E set domains"/>
    <property type="match status" value="4"/>
</dbReference>
<dbReference type="SUPFAM" id="SSF48350">
    <property type="entry name" value="GTPase activation domain, GAP"/>
    <property type="match status" value="1"/>
</dbReference>
<dbReference type="SUPFAM" id="SSF103575">
    <property type="entry name" value="Plexin repeat"/>
    <property type="match status" value="2"/>
</dbReference>
<dbReference type="SUPFAM" id="SSF101912">
    <property type="entry name" value="Sema domain"/>
    <property type="match status" value="1"/>
</dbReference>
<dbReference type="PROSITE" id="PS51004">
    <property type="entry name" value="SEMA"/>
    <property type="match status" value="1"/>
</dbReference>
<gene>
    <name type="primary">PLXNA4</name>
    <name type="synonym">KIAA1550</name>
    <name type="synonym">PLXNA4A</name>
    <name type="synonym">PLXNA4B</name>
    <name type="ORF">UNQ2820/PRO34003</name>
</gene>
<accession>Q9HCM2</accession>
<accession>A4D1N6</accession>
<accession>E9PAM2</accession>
<accession>Q6UWC6</accession>
<accession>Q6ZW89</accession>
<accession>Q8N969</accession>
<accession>Q8ND00</accession>
<accession>Q8NEN3</accession>
<accession>Q9NTD4</accession>
<sequence>MKAMPWNWTCLLSHLLMVGMGSSTLLTRQPAPLSQKQRSFVTFRGEPAEGFNHLVVDERTGHIYLGAVNRIYKLSSDLKVLVTHETGPDEDNPKCYPPRIVQTCNEPLTTTNNVNKMLLIDYKENRLIACGSLYQGICKLLRLEDLFKLGEPYHKKEHYLSGVNESGSVFGVIVSYSNLDDKLFIATAVDGKPEYFPTISSRKLTKNSEADGMFAYVFHDEFVASMIKIPSDTFTIIPDFDIYYVYGFSSGNFVYFLTLQPEMVSPPGSTTKEQVYTSKLVRLCKEDTAFNSYVEVPIGCERSGVEYRLLQAAYLSKAGAVLGRTLGVHPDDDLLFTVFSKGQKRKMKSLDESALCIFILKQINDRIKERLQSCYRGEGTLDLAWLKVKDIPCSSALLTIDDNFCGLDMNAPLGVSDMVRGIPVFTEDRDRMTSVIAYVYKNHSLAFVGTKSGKLKKIRVDGPRGNALQYETVQVVDPGPVLRDMAFSKDHEQLYIMSERQLTRVPVESCGQYQSCGECLGSGDPHCGWCVLHNTCTRKERCERSKEPRRFASEMKQCVRLTVHPNNISVSQYNVLLVLETYNVPELSAGVNCTFEDLSEMDGLVVGNQIQCYSPAAKEVPRIITENGDHHVVQLQLKSKETGMTFASTSFVFYNCSVHNSCLSCVESPYRCHWCKYRHVCTHDPKTCSFQEGRVKLPEDCPQLLRVDKILVPVEVIKPITLKAKNLPQPQSGQRGYECILNIQGSEQRVPALRFNSSSVQCQNTSYSYEGMEINNLPVELTVVWNGHFNIDNPAQNKVHLYKCGAMRESCGLCLKADPDFACGWCQGPGQCTLRQHCPAQESQWLELSGAKSKCTNPRITEIIPVTGPREGGTKVTIRGENLGLEFRDIASHVKVAGVECSPLVDGYIPAEQIVCEMGEAKPSQHAGFVEICVAVCRPEFMARSSQLYYFMTLTLSDLKPSRGPMSGGTQVTITGTNLNAGSNVVVMFGKQPCLFHRRSPSYIVCNTTSSDEVLEMKVSVQVDRAKIHQDLVFQYVEDPTIVRIEPEWSIVSGNTPIAVWGTHLDLIQNPQIRAKHGGKEHINICEVLNATEMTCQAPALALGPDHQSDLTERPEEFGFILDNVQSLLILNKTNFTYYPNPVFEAFGPSGILELKPGTPIILKGKNLIPPVAGGNVKLNYTVLVGEKPCTVTVSDVQLLCESPNLIGRHKVMARVGGMEYSPGMVYIAPDSPLSLPAIVSIAVAGGLLIIFIVAVLIAYKRKSRESDLTLKRLQMQMDNLESRVALECKEAFAELQTDIHELTSDLDGAGIPFLDYRTYTMRVLFPGIEDHPVLRDLEVPGYRQERVEKGLKLFAQLINNKVFLLSFIRTLESQRSFSMRDRGNVASLIMTVLQSKLEYATDVLKQLLADLIDKNLESKNHPKLLLRRTESVAEKMLTNWFTFLLYKFLKECAGEPLFSLFCAIKQQMEKGPIDAITGEARYSLSEDKLIRQQIDYKTLVLSCVSPDNANSPEVPVKILNCDTITQVKEKILDAIFKNVPCSHRPKAADMDLEWRQGSGARMILQDEDITTKIENDWKRLNTLAHYQVPDGSVVALVSKQVTAYNAVNNSTVSRTSASKYENMIRYTGSPDSLRSRTPMITPDLESGVKMWHLVKNHEHGDQKEGDRGSKMVSEIYLTRLLATKGTLQKFVDDLFETIFSTAHRGSALPLAIKYMFDFLDEQADKHGIHDPHVRHTWKSNCLPLRFWVNMIKNPQFVFDIHKNSITDACLSVVAQTFMDSCSTSEHRLGKDSPSNKLLYAKDIPSYKNWVERYYSDIGKMPAISDQDMNAYLAEQSRMHMNEFNTMSALSEIFSYVGKYSEEILGPLDHDDQCGKQKLAYKLEQVITLMSLDS</sequence>